<feature type="chain" id="PRO_0000188611" description="Glycogen synthase">
    <location>
        <begin position="1"/>
        <end position="477"/>
    </location>
</feature>
<feature type="binding site">
    <location>
        <position position="15"/>
    </location>
    <ligand>
        <name>ADP-alpha-D-glucose</name>
        <dbReference type="ChEBI" id="CHEBI:57498"/>
    </ligand>
</feature>
<feature type="sequence conflict" description="In Ref. 1; AAA23870." evidence="1" ref="1">
    <original>F</original>
    <variation>S</variation>
    <location>
        <position position="63"/>
    </location>
</feature>
<feature type="sequence conflict" description="In Ref. 1; AAA23870." evidence="1" ref="1">
    <original>AY</original>
    <variation>VH</variation>
    <location>
        <begin position="102"/>
        <end position="103"/>
    </location>
</feature>
<feature type="sequence conflict" description="In Ref. 1; AAA23870." evidence="1" ref="1">
    <original>L</original>
    <variation>P</variation>
    <location>
        <position position="245"/>
    </location>
</feature>
<feature type="sequence conflict" description="In Ref. 1; AAA23870." evidence="1" ref="1">
    <original>L</original>
    <variation>S</variation>
    <location>
        <position position="280"/>
    </location>
</feature>
<feature type="sequence conflict" description="In Ref. 1; AAA23870." evidence="1" ref="1">
    <original>L</original>
    <variation>S</variation>
    <location>
        <position position="286"/>
    </location>
</feature>
<feature type="sequence conflict" description="In Ref. 1; AAA23870." evidence="1" ref="1">
    <original>L</original>
    <variation>S</variation>
    <location>
        <position position="309"/>
    </location>
</feature>
<feature type="sequence conflict" description="In Ref. 1; AAA23870." evidence="1" ref="1">
    <original>L</original>
    <variation>S</variation>
    <location>
        <position position="314"/>
    </location>
</feature>
<feature type="sequence conflict" description="In Ref. 1; AAA23870." evidence="1" ref="1">
    <original>LL</original>
    <variation>SS</variation>
    <location>
        <begin position="317"/>
        <end position="318"/>
    </location>
</feature>
<feature type="sequence conflict" description="In Ref. 1; AAA23870." evidence="1" ref="1">
    <original>L</original>
    <variation>S</variation>
    <location>
        <position position="387"/>
    </location>
</feature>
<feature type="sequence conflict" description="In Ref. 1; AAA23870." evidence="1" ref="1">
    <original>S</original>
    <variation>N</variation>
    <location>
        <position position="419"/>
    </location>
</feature>
<feature type="sequence conflict" description="In Ref. 1; AAA23870." evidence="1" ref="1">
    <original>V</original>
    <variation>I</variation>
    <location>
        <position position="422"/>
    </location>
</feature>
<feature type="sequence conflict" description="In Ref. 1; AAA23870." evidence="1" ref="1">
    <original>A</original>
    <variation>T</variation>
    <location>
        <position position="434"/>
    </location>
</feature>
<feature type="sequence conflict" description="In Ref. 1." evidence="1" ref="1">
    <original>R</original>
    <variation>C</variation>
    <location>
        <position position="444"/>
    </location>
</feature>
<feature type="sequence conflict" description="In Ref. 1." evidence="1" ref="1">
    <original>S</original>
    <variation>P</variation>
    <location>
        <position position="446"/>
    </location>
</feature>
<feature type="sequence conflict" description="In Ref. 1; AAA23870." evidence="1" ref="1">
    <original>S</original>
    <variation>G</variation>
    <location>
        <position position="461"/>
    </location>
</feature>
<feature type="sequence conflict" description="In Ref. 1; AAA23870." evidence="1" ref="1">
    <original>L</original>
    <variation>S</variation>
    <location>
        <position position="476"/>
    </location>
</feature>
<feature type="strand" evidence="2">
    <location>
        <begin position="2"/>
        <end position="6"/>
    </location>
</feature>
<feature type="turn" evidence="2">
    <location>
        <begin position="11"/>
        <end position="13"/>
    </location>
</feature>
<feature type="helix" evidence="2">
    <location>
        <begin position="18"/>
        <end position="32"/>
    </location>
</feature>
<feature type="strand" evidence="2">
    <location>
        <begin position="36"/>
        <end position="42"/>
    </location>
</feature>
<feature type="helix" evidence="2">
    <location>
        <begin position="45"/>
        <end position="50"/>
    </location>
</feature>
<feature type="strand" evidence="2">
    <location>
        <begin position="55"/>
        <end position="60"/>
    </location>
</feature>
<feature type="strand" evidence="2">
    <location>
        <begin position="67"/>
        <end position="74"/>
    </location>
</feature>
<feature type="strand" evidence="2">
    <location>
        <begin position="77"/>
        <end position="83"/>
    </location>
</feature>
<feature type="helix" evidence="2">
    <location>
        <begin position="85"/>
        <end position="88"/>
    </location>
</feature>
<feature type="strand" evidence="4">
    <location>
        <begin position="91"/>
        <end position="93"/>
    </location>
</feature>
<feature type="strand" evidence="2">
    <location>
        <begin position="94"/>
        <end position="96"/>
    </location>
</feature>
<feature type="helix" evidence="2">
    <location>
        <begin position="106"/>
        <end position="120"/>
    </location>
</feature>
<feature type="turn" evidence="2">
    <location>
        <begin position="121"/>
        <end position="123"/>
    </location>
</feature>
<feature type="strand" evidence="2">
    <location>
        <begin position="131"/>
        <end position="136"/>
    </location>
</feature>
<feature type="helix" evidence="2">
    <location>
        <begin position="138"/>
        <end position="140"/>
    </location>
</feature>
<feature type="helix" evidence="2">
    <location>
        <begin position="143"/>
        <end position="149"/>
    </location>
</feature>
<feature type="strand" evidence="2">
    <location>
        <begin position="153"/>
        <end position="161"/>
    </location>
</feature>
<feature type="strand" evidence="2">
    <location>
        <begin position="168"/>
        <end position="170"/>
    </location>
</feature>
<feature type="helix" evidence="2">
    <location>
        <begin position="171"/>
        <end position="175"/>
    </location>
</feature>
<feature type="turn" evidence="2">
    <location>
        <begin position="176"/>
        <end position="178"/>
    </location>
</feature>
<feature type="helix" evidence="2">
    <location>
        <begin position="181"/>
        <end position="183"/>
    </location>
</feature>
<feature type="turn" evidence="2">
    <location>
        <begin position="186"/>
        <end position="189"/>
    </location>
</feature>
<feature type="strand" evidence="2">
    <location>
        <begin position="194"/>
        <end position="196"/>
    </location>
</feature>
<feature type="helix" evidence="2">
    <location>
        <begin position="197"/>
        <end position="204"/>
    </location>
</feature>
<feature type="strand" evidence="2">
    <location>
        <begin position="206"/>
        <end position="212"/>
    </location>
</feature>
<feature type="helix" evidence="2">
    <location>
        <begin position="213"/>
        <end position="218"/>
    </location>
</feature>
<feature type="helix" evidence="2">
    <location>
        <begin position="222"/>
        <end position="225"/>
    </location>
</feature>
<feature type="helix" evidence="2">
    <location>
        <begin position="229"/>
        <end position="237"/>
    </location>
</feature>
<feature type="strand" evidence="2">
    <location>
        <begin position="241"/>
        <end position="243"/>
    </location>
</feature>
<feature type="turn" evidence="2">
    <location>
        <begin position="250"/>
        <end position="252"/>
    </location>
</feature>
<feature type="turn" evidence="2">
    <location>
        <begin position="255"/>
        <end position="257"/>
    </location>
</feature>
<feature type="strand" evidence="2">
    <location>
        <begin position="261"/>
        <end position="263"/>
    </location>
</feature>
<feature type="helix" evidence="2">
    <location>
        <begin position="270"/>
        <end position="273"/>
    </location>
</feature>
<feature type="helix" evidence="2">
    <location>
        <begin position="274"/>
        <end position="284"/>
    </location>
</feature>
<feature type="strand" evidence="3">
    <location>
        <begin position="290"/>
        <end position="292"/>
    </location>
</feature>
<feature type="strand" evidence="2">
    <location>
        <begin position="294"/>
        <end position="302"/>
    </location>
</feature>
<feature type="helix" evidence="2">
    <location>
        <begin position="303"/>
        <end position="305"/>
    </location>
</feature>
<feature type="helix" evidence="2">
    <location>
        <begin position="307"/>
        <end position="319"/>
    </location>
</feature>
<feature type="strand" evidence="2">
    <location>
        <begin position="323"/>
        <end position="330"/>
    </location>
</feature>
<feature type="helix" evidence="2">
    <location>
        <begin position="332"/>
        <end position="344"/>
    </location>
</feature>
<feature type="turn" evidence="2">
    <location>
        <begin position="346"/>
        <end position="348"/>
    </location>
</feature>
<feature type="strand" evidence="2">
    <location>
        <begin position="349"/>
        <end position="354"/>
    </location>
</feature>
<feature type="helix" evidence="2">
    <location>
        <begin position="357"/>
        <end position="366"/>
    </location>
</feature>
<feature type="strand" evidence="2">
    <location>
        <begin position="368"/>
        <end position="372"/>
    </location>
</feature>
<feature type="helix" evidence="2">
    <location>
        <begin position="382"/>
        <end position="389"/>
    </location>
</feature>
<feature type="strand" evidence="2">
    <location>
        <begin position="392"/>
        <end position="398"/>
    </location>
</feature>
<feature type="helix" evidence="2">
    <location>
        <begin position="399"/>
        <end position="404"/>
    </location>
</feature>
<feature type="helix" evidence="2">
    <location>
        <begin position="410"/>
        <end position="414"/>
    </location>
</feature>
<feature type="strand" evidence="2">
    <location>
        <begin position="420"/>
        <end position="423"/>
    </location>
</feature>
<feature type="strand" evidence="2">
    <location>
        <begin position="425"/>
        <end position="427"/>
    </location>
</feature>
<feature type="helix" evidence="2">
    <location>
        <begin position="428"/>
        <end position="442"/>
    </location>
</feature>
<feature type="helix" evidence="2">
    <location>
        <begin position="445"/>
        <end position="457"/>
    </location>
</feature>
<feature type="helix" evidence="2">
    <location>
        <begin position="462"/>
        <end position="476"/>
    </location>
</feature>
<evidence type="ECO:0000305" key="1"/>
<evidence type="ECO:0007829" key="2">
    <source>
        <dbReference type="PDB" id="2QZS"/>
    </source>
</evidence>
<evidence type="ECO:0007829" key="3">
    <source>
        <dbReference type="PDB" id="3CX4"/>
    </source>
</evidence>
<evidence type="ECO:0007829" key="4">
    <source>
        <dbReference type="PDB" id="3D1J"/>
    </source>
</evidence>
<accession>P0A6U8</accession>
<accession>P08323</accession>
<accession>Q2M793</accession>
<sequence length="477" mass="52822">MQVLHVCSEMFPLLKTGGLADVIGALPAAQIADGVDARVLLPAFPDIRRGVTDAQVVSRRDTFAGHITLLFGHYNGVGIYLIDAPHLYDRPGSPYHDTNLFAYTDNVLRFALLGWVGAEMASGLDPFWRPDVVHAHDWHAGLAPAYLAARGRPAKSVFTVHNLAYQGMFYAHHMNDIQLPWSFFNIHGLEFNGQISFLKAGLYYADHITAVSPTYAREITEPQFAYGMEGLLQQRHREGRLSGVLNGVDEKIWSPETDLLLASRYTRDTLEDKAENKRQLQIAMGLKVDDKVPLFAVVSRLTSQKGLDLVLEALPGLLEQGGQLALLGAGDPVLQEGFLAAAAEYPGQVGVQIGYHEAFSHRIMGGADVILVPSRFEPCGLTQLYGLKYGTLPLVRRTGGLADTVSDCSLENLADGVASGFVFEDSNAWSLLRAIRRAFVLWSRPSLWRFVQRQAMAMDFSWQVAAKSYRELYYRLK</sequence>
<dbReference type="EC" id="2.4.1.21"/>
<dbReference type="EMBL" id="V00281">
    <property type="protein sequence ID" value="CAA23545.1"/>
    <property type="molecule type" value="Genomic_DNA"/>
</dbReference>
<dbReference type="EMBL" id="J02616">
    <property type="protein sequence ID" value="AAA23870.1"/>
    <property type="molecule type" value="Genomic_DNA"/>
</dbReference>
<dbReference type="EMBL" id="U18997">
    <property type="protein sequence ID" value="AAA58227.1"/>
    <property type="molecule type" value="Genomic_DNA"/>
</dbReference>
<dbReference type="EMBL" id="U00096">
    <property type="protein sequence ID" value="AAC76454.1"/>
    <property type="molecule type" value="Genomic_DNA"/>
</dbReference>
<dbReference type="EMBL" id="AP009048">
    <property type="protein sequence ID" value="BAE77863.1"/>
    <property type="molecule type" value="Genomic_DNA"/>
</dbReference>
<dbReference type="EMBL" id="J01616">
    <property type="protein sequence ID" value="AAA98737.1"/>
    <property type="molecule type" value="Genomic_DNA"/>
</dbReference>
<dbReference type="PIR" id="H65138">
    <property type="entry name" value="SYECGL"/>
</dbReference>
<dbReference type="RefSeq" id="NP_417887.1">
    <property type="nucleotide sequence ID" value="NC_000913.3"/>
</dbReference>
<dbReference type="RefSeq" id="WP_001197646.1">
    <property type="nucleotide sequence ID" value="NZ_STEB01000004.1"/>
</dbReference>
<dbReference type="PDB" id="2QZS">
    <property type="method" value="X-ray"/>
    <property type="resolution" value="2.20 A"/>
    <property type="chains" value="A=1-477"/>
</dbReference>
<dbReference type="PDB" id="2R4T">
    <property type="method" value="X-ray"/>
    <property type="resolution" value="2.26 A"/>
    <property type="chains" value="A=1-477"/>
</dbReference>
<dbReference type="PDB" id="2R4U">
    <property type="method" value="X-ray"/>
    <property type="resolution" value="2.37 A"/>
    <property type="chains" value="A=1-477"/>
</dbReference>
<dbReference type="PDB" id="3COP">
    <property type="method" value="X-ray"/>
    <property type="resolution" value="2.30 A"/>
    <property type="chains" value="A=1-477"/>
</dbReference>
<dbReference type="PDB" id="3CX4">
    <property type="method" value="X-ray"/>
    <property type="resolution" value="2.29 A"/>
    <property type="chains" value="A=1-477"/>
</dbReference>
<dbReference type="PDB" id="3D1J">
    <property type="method" value="X-ray"/>
    <property type="resolution" value="3.00 A"/>
    <property type="chains" value="A=1-477"/>
</dbReference>
<dbReference type="PDB" id="3GUH">
    <property type="method" value="X-ray"/>
    <property type="resolution" value="2.79 A"/>
    <property type="chains" value="A=1-477"/>
</dbReference>
<dbReference type="PDBsum" id="2QZS"/>
<dbReference type="PDBsum" id="2R4T"/>
<dbReference type="PDBsum" id="2R4U"/>
<dbReference type="PDBsum" id="3COP"/>
<dbReference type="PDBsum" id="3CX4"/>
<dbReference type="PDBsum" id="3D1J"/>
<dbReference type="PDBsum" id="3GUH"/>
<dbReference type="SMR" id="P0A6U8"/>
<dbReference type="BioGRID" id="4262501">
    <property type="interactions" value="328"/>
</dbReference>
<dbReference type="FunCoup" id="P0A6U8">
    <property type="interactions" value="353"/>
</dbReference>
<dbReference type="IntAct" id="P0A6U8">
    <property type="interactions" value="1"/>
</dbReference>
<dbReference type="STRING" id="511145.b3429"/>
<dbReference type="jPOST" id="P0A6U8"/>
<dbReference type="PaxDb" id="511145-b3429"/>
<dbReference type="EnsemblBacteria" id="AAC76454">
    <property type="protein sequence ID" value="AAC76454"/>
    <property type="gene ID" value="b3429"/>
</dbReference>
<dbReference type="GeneID" id="75202274"/>
<dbReference type="GeneID" id="947932"/>
<dbReference type="KEGG" id="ecj:JW3392"/>
<dbReference type="KEGG" id="eco:b3429"/>
<dbReference type="KEGG" id="ecoc:C3026_18590"/>
<dbReference type="PATRIC" id="fig|1411691.4.peg.3299"/>
<dbReference type="EchoBASE" id="EB0372"/>
<dbReference type="eggNOG" id="COG0297">
    <property type="taxonomic scope" value="Bacteria"/>
</dbReference>
<dbReference type="HOGENOM" id="CLU_009583_18_2_6"/>
<dbReference type="InParanoid" id="P0A6U8"/>
<dbReference type="OMA" id="TWCPWYM"/>
<dbReference type="OrthoDB" id="9808590at2"/>
<dbReference type="PhylomeDB" id="P0A6U8"/>
<dbReference type="BioCyc" id="EcoCyc:GLYCOGENSYN-MONOMER"/>
<dbReference type="BioCyc" id="MetaCyc:GLYCOGENSYN-MONOMER"/>
<dbReference type="BRENDA" id="2.4.1.21">
    <property type="organism ID" value="2026"/>
</dbReference>
<dbReference type="UniPathway" id="UPA00164"/>
<dbReference type="EvolutionaryTrace" id="P0A6U8"/>
<dbReference type="PRO" id="PR:P0A6U8"/>
<dbReference type="Proteomes" id="UP000000625">
    <property type="component" value="Chromosome"/>
</dbReference>
<dbReference type="GO" id="GO:0005829">
    <property type="term" value="C:cytosol"/>
    <property type="evidence" value="ECO:0000314"/>
    <property type="project" value="EcoCyc"/>
</dbReference>
<dbReference type="GO" id="GO:0009011">
    <property type="term" value="F:alpha-1,4-glucan glucosyltransferase (ADP-glucose donor) activity"/>
    <property type="evidence" value="ECO:0000314"/>
    <property type="project" value="EcoCyc"/>
</dbReference>
<dbReference type="GO" id="GO:0004373">
    <property type="term" value="F:alpha-1,4-glucan glucosyltransferase (UDP-glucose donor) activity"/>
    <property type="evidence" value="ECO:0007669"/>
    <property type="project" value="InterPro"/>
</dbReference>
<dbReference type="GO" id="GO:0006974">
    <property type="term" value="P:DNA damage response"/>
    <property type="evidence" value="ECO:0000270"/>
    <property type="project" value="EcoliWiki"/>
</dbReference>
<dbReference type="GO" id="GO:0005978">
    <property type="term" value="P:glycogen biosynthetic process"/>
    <property type="evidence" value="ECO:0000315"/>
    <property type="project" value="EcoCyc"/>
</dbReference>
<dbReference type="CDD" id="cd03791">
    <property type="entry name" value="GT5_Glycogen_synthase_DULL1-like"/>
    <property type="match status" value="1"/>
</dbReference>
<dbReference type="FunFam" id="3.40.50.2000:FF:000008">
    <property type="entry name" value="Glycogen synthase"/>
    <property type="match status" value="1"/>
</dbReference>
<dbReference type="FunFam" id="3.40.50.2000:FF:000011">
    <property type="entry name" value="Glycogen synthase"/>
    <property type="match status" value="1"/>
</dbReference>
<dbReference type="Gene3D" id="3.40.50.2000">
    <property type="entry name" value="Glycogen Phosphorylase B"/>
    <property type="match status" value="2"/>
</dbReference>
<dbReference type="HAMAP" id="MF_00484">
    <property type="entry name" value="Glycogen_synth"/>
    <property type="match status" value="1"/>
</dbReference>
<dbReference type="InterPro" id="IPR001296">
    <property type="entry name" value="Glyco_trans_1"/>
</dbReference>
<dbReference type="InterPro" id="IPR011835">
    <property type="entry name" value="GS/SS"/>
</dbReference>
<dbReference type="InterPro" id="IPR013534">
    <property type="entry name" value="Starch_synth_cat_dom"/>
</dbReference>
<dbReference type="NCBIfam" id="TIGR02095">
    <property type="entry name" value="glgA"/>
    <property type="match status" value="1"/>
</dbReference>
<dbReference type="NCBIfam" id="NF001899">
    <property type="entry name" value="PRK00654.1-2"/>
    <property type="match status" value="1"/>
</dbReference>
<dbReference type="PANTHER" id="PTHR45825:SF11">
    <property type="entry name" value="ALPHA AMYLASE DOMAIN-CONTAINING PROTEIN"/>
    <property type="match status" value="1"/>
</dbReference>
<dbReference type="PANTHER" id="PTHR45825">
    <property type="entry name" value="GRANULE-BOUND STARCH SYNTHASE 1, CHLOROPLASTIC/AMYLOPLASTIC"/>
    <property type="match status" value="1"/>
</dbReference>
<dbReference type="Pfam" id="PF08323">
    <property type="entry name" value="Glyco_transf_5"/>
    <property type="match status" value="1"/>
</dbReference>
<dbReference type="Pfam" id="PF00534">
    <property type="entry name" value="Glycos_transf_1"/>
    <property type="match status" value="1"/>
</dbReference>
<dbReference type="SUPFAM" id="SSF53756">
    <property type="entry name" value="UDP-Glycosyltransferase/glycogen phosphorylase"/>
    <property type="match status" value="1"/>
</dbReference>
<comment type="function">
    <text>Synthesizes alpha-1,4-glucan chains using ADP-glucose.</text>
</comment>
<comment type="catalytic activity">
    <reaction>
        <text>[(1-&gt;4)-alpha-D-glucosyl](n) + ADP-alpha-D-glucose = [(1-&gt;4)-alpha-D-glucosyl](n+1) + ADP + H(+)</text>
        <dbReference type="Rhea" id="RHEA:18189"/>
        <dbReference type="Rhea" id="RHEA-COMP:9584"/>
        <dbReference type="Rhea" id="RHEA-COMP:9587"/>
        <dbReference type="ChEBI" id="CHEBI:15378"/>
        <dbReference type="ChEBI" id="CHEBI:15444"/>
        <dbReference type="ChEBI" id="CHEBI:57498"/>
        <dbReference type="ChEBI" id="CHEBI:456216"/>
        <dbReference type="EC" id="2.4.1.21"/>
    </reaction>
</comment>
<comment type="pathway">
    <text>Glycan biosynthesis; glycogen biosynthesis.</text>
</comment>
<comment type="similarity">
    <text evidence="1">Belongs to the glycosyltransferase 1 family. Bacterial/plant glycogen synthase subfamily.</text>
</comment>
<proteinExistence type="evidence at protein level"/>
<keyword id="KW-0002">3D-structure</keyword>
<keyword id="KW-0903">Direct protein sequencing</keyword>
<keyword id="KW-0320">Glycogen biosynthesis</keyword>
<keyword id="KW-0328">Glycosyltransferase</keyword>
<keyword id="KW-1185">Reference proteome</keyword>
<keyword id="KW-0808">Transferase</keyword>
<protein>
    <recommendedName>
        <fullName>Glycogen synthase</fullName>
        <ecNumber>2.4.1.21</ecNumber>
    </recommendedName>
    <alternativeName>
        <fullName>Starch [bacterial glycogen] synthase</fullName>
    </alternativeName>
</protein>
<gene>
    <name type="primary">glgA</name>
    <name type="ordered locus">b3429</name>
    <name type="ordered locus">JW3392</name>
</gene>
<organism>
    <name type="scientific">Escherichia coli (strain K12)</name>
    <dbReference type="NCBI Taxonomy" id="83333"/>
    <lineage>
        <taxon>Bacteria</taxon>
        <taxon>Pseudomonadati</taxon>
        <taxon>Pseudomonadota</taxon>
        <taxon>Gammaproteobacteria</taxon>
        <taxon>Enterobacterales</taxon>
        <taxon>Enterobacteriaceae</taxon>
        <taxon>Escherichia</taxon>
    </lineage>
</organism>
<reference key="1">
    <citation type="journal article" date="1986" name="J. Biol. Chem.">
        <title>Biosynthesis of bacterial glycogen. Primary structure of Escherichia coli ADP-glucose:alpha-1,4-glucan, 4-glucosyltransferase as deduced from the nucleotide sequence of the glgA gene.</title>
        <authorList>
            <person name="Kumar A."/>
            <person name="Larsen C.E."/>
            <person name="Preiss J."/>
        </authorList>
    </citation>
    <scope>NUCLEOTIDE SEQUENCE [GENOMIC DNA]</scope>
</reference>
<reference key="2">
    <citation type="journal article" date="1997" name="Science">
        <title>The complete genome sequence of Escherichia coli K-12.</title>
        <authorList>
            <person name="Blattner F.R."/>
            <person name="Plunkett G. III"/>
            <person name="Bloch C.A."/>
            <person name="Perna N.T."/>
            <person name="Burland V."/>
            <person name="Riley M."/>
            <person name="Collado-Vides J."/>
            <person name="Glasner J.D."/>
            <person name="Rode C.K."/>
            <person name="Mayhew G.F."/>
            <person name="Gregor J."/>
            <person name="Davis N.W."/>
            <person name="Kirkpatrick H.A."/>
            <person name="Goeden M.A."/>
            <person name="Rose D.J."/>
            <person name="Mau B."/>
            <person name="Shao Y."/>
        </authorList>
    </citation>
    <scope>NUCLEOTIDE SEQUENCE [LARGE SCALE GENOMIC DNA]</scope>
    <source>
        <strain>K12 / MG1655 / ATCC 47076</strain>
    </source>
</reference>
<reference key="3">
    <citation type="journal article" date="2006" name="Mol. Syst. Biol.">
        <title>Highly accurate genome sequences of Escherichia coli K-12 strains MG1655 and W3110.</title>
        <authorList>
            <person name="Hayashi K."/>
            <person name="Morooka N."/>
            <person name="Yamamoto Y."/>
            <person name="Fujita K."/>
            <person name="Isono K."/>
            <person name="Choi S."/>
            <person name="Ohtsubo E."/>
            <person name="Baba T."/>
            <person name="Wanner B.L."/>
            <person name="Mori H."/>
            <person name="Horiuchi T."/>
        </authorList>
    </citation>
    <scope>NUCLEOTIDE SEQUENCE [LARGE SCALE GENOMIC DNA]</scope>
    <source>
        <strain>K12 / W3110 / ATCC 27325 / DSM 5911</strain>
    </source>
</reference>
<reference key="4">
    <citation type="journal article" date="1983" name="J. Biol. Chem.">
        <title>Biosynthesis of bacterial glycogen. Primary structure of Escherichia coli ADP-glucose synthetase as deduced from the nucleotide sequence of the glg C gene.</title>
        <authorList>
            <person name="Baecker P.A."/>
            <person name="Furlong C.E."/>
            <person name="Preiss J."/>
        </authorList>
    </citation>
    <scope>NUCLEOTIDE SEQUENCE [GENOMIC DNA] OF 1-11</scope>
</reference>
<reference key="5">
    <citation type="journal article" date="1992" name="J. Bacteriol.">
        <title>The 55-kilodalton protein in an oriC complex fraction is glycogen synthase.</title>
        <authorList>
            <person name="Kaidow A."/>
            <person name="Kataoka T."/>
            <person name="Wachi M."/>
            <person name="Takada A."/>
            <person name="Yamasaki M."/>
            <person name="Nagai K."/>
        </authorList>
    </citation>
    <scope>PROTEIN SEQUENCE OF 1-10</scope>
</reference>
<name>GLGA_ECOLI</name>